<accession>B3E0Z6</accession>
<gene>
    <name evidence="1" type="primary">atpF</name>
    <name type="ordered locus">Minf_2419</name>
</gene>
<sequence>MHQLGIEWNKLIAQIINFVIVLWVLNRFAFKPVLKILEERRKKIAESLQNAEKIKQELAEAEEARKEILRKANEQASFIVAEAQKVASYQGEKKIQEAVEEAKRVLKKAEESAKLEREKAKEEMRREILNLVIEITSKVVGKTLTLDDQERLKNEVLSKLPQKEGHEAYSRN</sequence>
<protein>
    <recommendedName>
        <fullName evidence="1">ATP synthase subunit b</fullName>
    </recommendedName>
    <alternativeName>
        <fullName evidence="1">ATP synthase F(0) sector subunit b</fullName>
    </alternativeName>
    <alternativeName>
        <fullName evidence="1">ATPase subunit I</fullName>
    </alternativeName>
    <alternativeName>
        <fullName evidence="1">F-type ATPase subunit b</fullName>
        <shortName evidence="1">F-ATPase subunit b</shortName>
    </alternativeName>
</protein>
<name>ATPF_METI4</name>
<keyword id="KW-0066">ATP synthesis</keyword>
<keyword id="KW-0997">Cell inner membrane</keyword>
<keyword id="KW-1003">Cell membrane</keyword>
<keyword id="KW-0138">CF(0)</keyword>
<keyword id="KW-0375">Hydrogen ion transport</keyword>
<keyword id="KW-0406">Ion transport</keyword>
<keyword id="KW-0472">Membrane</keyword>
<keyword id="KW-0812">Transmembrane</keyword>
<keyword id="KW-1133">Transmembrane helix</keyword>
<keyword id="KW-0813">Transport</keyword>
<feature type="chain" id="PRO_0000368582" description="ATP synthase subunit b">
    <location>
        <begin position="1"/>
        <end position="172"/>
    </location>
</feature>
<feature type="transmembrane region" description="Helical" evidence="1">
    <location>
        <begin position="11"/>
        <end position="30"/>
    </location>
</feature>
<organism>
    <name type="scientific">Methylacidiphilum infernorum (isolate V4)</name>
    <name type="common">Methylokorus infernorum (strain V4)</name>
    <dbReference type="NCBI Taxonomy" id="481448"/>
    <lineage>
        <taxon>Bacteria</taxon>
        <taxon>Pseudomonadati</taxon>
        <taxon>Verrucomicrobiota</taxon>
        <taxon>Methylacidiphilae</taxon>
        <taxon>Methylacidiphilales</taxon>
        <taxon>Methylacidiphilaceae</taxon>
        <taxon>Methylacidiphilum (ex Ratnadevi et al. 2023)</taxon>
    </lineage>
</organism>
<dbReference type="EMBL" id="CP000975">
    <property type="protein sequence ID" value="ACD84473.1"/>
    <property type="molecule type" value="Genomic_DNA"/>
</dbReference>
<dbReference type="SMR" id="B3E0Z6"/>
<dbReference type="STRING" id="481448.Minf_2419"/>
<dbReference type="KEGG" id="min:Minf_2419"/>
<dbReference type="eggNOG" id="COG0711">
    <property type="taxonomic scope" value="Bacteria"/>
</dbReference>
<dbReference type="HOGENOM" id="CLU_079215_4_0_0"/>
<dbReference type="OrthoDB" id="193923at2"/>
<dbReference type="Proteomes" id="UP000009149">
    <property type="component" value="Chromosome"/>
</dbReference>
<dbReference type="GO" id="GO:0005886">
    <property type="term" value="C:plasma membrane"/>
    <property type="evidence" value="ECO:0007669"/>
    <property type="project" value="UniProtKB-SubCell"/>
</dbReference>
<dbReference type="GO" id="GO:0045259">
    <property type="term" value="C:proton-transporting ATP synthase complex"/>
    <property type="evidence" value="ECO:0007669"/>
    <property type="project" value="UniProtKB-KW"/>
</dbReference>
<dbReference type="GO" id="GO:0046933">
    <property type="term" value="F:proton-transporting ATP synthase activity, rotational mechanism"/>
    <property type="evidence" value="ECO:0007669"/>
    <property type="project" value="UniProtKB-UniRule"/>
</dbReference>
<dbReference type="GO" id="GO:0046961">
    <property type="term" value="F:proton-transporting ATPase activity, rotational mechanism"/>
    <property type="evidence" value="ECO:0007669"/>
    <property type="project" value="TreeGrafter"/>
</dbReference>
<dbReference type="CDD" id="cd06503">
    <property type="entry name" value="ATP-synt_Fo_b"/>
    <property type="match status" value="1"/>
</dbReference>
<dbReference type="Gene3D" id="6.10.250.1580">
    <property type="match status" value="1"/>
</dbReference>
<dbReference type="HAMAP" id="MF_01398">
    <property type="entry name" value="ATP_synth_b_bprime"/>
    <property type="match status" value="1"/>
</dbReference>
<dbReference type="InterPro" id="IPR028987">
    <property type="entry name" value="ATP_synth_B-like_membr_sf"/>
</dbReference>
<dbReference type="InterPro" id="IPR002146">
    <property type="entry name" value="ATP_synth_b/b'su_bac/chlpt"/>
</dbReference>
<dbReference type="InterPro" id="IPR005864">
    <property type="entry name" value="ATP_synth_F0_bsu_bac"/>
</dbReference>
<dbReference type="InterPro" id="IPR050059">
    <property type="entry name" value="ATP_synthase_B_chain"/>
</dbReference>
<dbReference type="NCBIfam" id="TIGR01144">
    <property type="entry name" value="ATP_synt_b"/>
    <property type="match status" value="1"/>
</dbReference>
<dbReference type="PANTHER" id="PTHR33445">
    <property type="entry name" value="ATP SYNTHASE SUBUNIT B', CHLOROPLASTIC"/>
    <property type="match status" value="1"/>
</dbReference>
<dbReference type="PANTHER" id="PTHR33445:SF2">
    <property type="entry name" value="ATP SYNTHASE SUBUNIT B', CHLOROPLASTIC"/>
    <property type="match status" value="1"/>
</dbReference>
<dbReference type="Pfam" id="PF00430">
    <property type="entry name" value="ATP-synt_B"/>
    <property type="match status" value="1"/>
</dbReference>
<dbReference type="SUPFAM" id="SSF81573">
    <property type="entry name" value="F1F0 ATP synthase subunit B, membrane domain"/>
    <property type="match status" value="1"/>
</dbReference>
<comment type="function">
    <text evidence="1">F(1)F(0) ATP synthase produces ATP from ADP in the presence of a proton or sodium gradient. F-type ATPases consist of two structural domains, F(1) containing the extramembraneous catalytic core and F(0) containing the membrane proton channel, linked together by a central stalk and a peripheral stalk. During catalysis, ATP synthesis in the catalytic domain of F(1) is coupled via a rotary mechanism of the central stalk subunits to proton translocation.</text>
</comment>
<comment type="function">
    <text evidence="1">Component of the F(0) channel, it forms part of the peripheral stalk, linking F(1) to F(0).</text>
</comment>
<comment type="subunit">
    <text evidence="1">F-type ATPases have 2 components, F(1) - the catalytic core - and F(0) - the membrane proton channel. F(1) has five subunits: alpha(3), beta(3), gamma(1), delta(1), epsilon(1). F(0) has three main subunits: a(1), b(2) and c(10-14). The alpha and beta chains form an alternating ring which encloses part of the gamma chain. F(1) is attached to F(0) by a central stalk formed by the gamma and epsilon chains, while a peripheral stalk is formed by the delta and b chains.</text>
</comment>
<comment type="subcellular location">
    <subcellularLocation>
        <location evidence="1">Cell inner membrane</location>
        <topology evidence="1">Single-pass membrane protein</topology>
    </subcellularLocation>
</comment>
<comment type="similarity">
    <text evidence="1">Belongs to the ATPase B chain family.</text>
</comment>
<proteinExistence type="inferred from homology"/>
<reference key="1">
    <citation type="journal article" date="2008" name="Biol. Direct">
        <title>Complete genome sequence of the extremely acidophilic methanotroph isolate V4, Methylacidiphilum infernorum, a representative of the bacterial phylum Verrucomicrobia.</title>
        <authorList>
            <person name="Hou S."/>
            <person name="Makarova K.S."/>
            <person name="Saw J.H."/>
            <person name="Senin P."/>
            <person name="Ly B.V."/>
            <person name="Zhou Z."/>
            <person name="Ren Y."/>
            <person name="Wang J."/>
            <person name="Galperin M.Y."/>
            <person name="Omelchenko M.V."/>
            <person name="Wolf Y.I."/>
            <person name="Yutin N."/>
            <person name="Koonin E.V."/>
            <person name="Stott M.B."/>
            <person name="Mountain B.W."/>
            <person name="Crowe M.A."/>
            <person name="Smirnova A.V."/>
            <person name="Dunfield P.F."/>
            <person name="Feng L."/>
            <person name="Wang L."/>
            <person name="Alam M."/>
        </authorList>
    </citation>
    <scope>NUCLEOTIDE SEQUENCE [LARGE SCALE GENOMIC DNA]</scope>
    <source>
        <strain>Isolate V4</strain>
    </source>
</reference>
<evidence type="ECO:0000255" key="1">
    <source>
        <dbReference type="HAMAP-Rule" id="MF_01398"/>
    </source>
</evidence>